<feature type="chain" id="PRO_0000327220" description="SHC-transforming protein 1">
    <location>
        <begin position="1"/>
        <end position="473"/>
    </location>
</feature>
<feature type="domain" description="PID" evidence="5">
    <location>
        <begin position="46"/>
        <end position="229"/>
    </location>
</feature>
<feature type="domain" description="SH2" evidence="6">
    <location>
        <begin position="378"/>
        <end position="469"/>
    </location>
</feature>
<feature type="region of interest" description="Disordered" evidence="7">
    <location>
        <begin position="1"/>
        <end position="26"/>
    </location>
</feature>
<feature type="region of interest" description="Disordered" evidence="7">
    <location>
        <begin position="216"/>
        <end position="314"/>
    </location>
</feature>
<feature type="region of interest" description="CH1">
    <location>
        <begin position="230"/>
        <end position="377"/>
    </location>
</feature>
<feature type="region of interest" description="Disordered" evidence="7">
    <location>
        <begin position="328"/>
        <end position="348"/>
    </location>
</feature>
<feature type="modified residue" description="Phosphoserine" evidence="2">
    <location>
        <position position="29"/>
    </location>
</feature>
<feature type="modified residue" description="N6-acetyllysine" evidence="3">
    <location>
        <position position="44"/>
    </location>
</feature>
<feature type="modified residue" description="Phosphotyrosine" evidence="2">
    <location>
        <position position="239"/>
    </location>
</feature>
<feature type="modified residue" description="Phosphotyrosine" evidence="2">
    <location>
        <position position="240"/>
    </location>
</feature>
<feature type="modified residue" description="Phosphotyrosine" evidence="2">
    <location>
        <position position="317"/>
    </location>
</feature>
<feature type="modified residue" description="Phosphoserine" evidence="2">
    <location>
        <position position="343"/>
    </location>
</feature>
<feature type="sequence conflict" description="In Ref. 2; AAZ38953." evidence="8" ref="2">
    <original>NK</original>
    <variation>HN</variation>
    <location>
        <begin position="2"/>
        <end position="3"/>
    </location>
</feature>
<accession>Q0IIE2</accession>
<accession>Q45KX9</accession>
<evidence type="ECO:0000250" key="1"/>
<evidence type="ECO:0000250" key="2">
    <source>
        <dbReference type="UniProtKB" id="P29353"/>
    </source>
</evidence>
<evidence type="ECO:0000250" key="3">
    <source>
        <dbReference type="UniProtKB" id="P98083"/>
    </source>
</evidence>
<evidence type="ECO:0000250" key="4">
    <source>
        <dbReference type="UniProtKB" id="Q5M824"/>
    </source>
</evidence>
<evidence type="ECO:0000255" key="5">
    <source>
        <dbReference type="PROSITE-ProRule" id="PRU00148"/>
    </source>
</evidence>
<evidence type="ECO:0000255" key="6">
    <source>
        <dbReference type="PROSITE-ProRule" id="PRU00191"/>
    </source>
</evidence>
<evidence type="ECO:0000256" key="7">
    <source>
        <dbReference type="SAM" id="MobiDB-lite"/>
    </source>
</evidence>
<evidence type="ECO:0000305" key="8"/>
<gene>
    <name type="primary">SHC1</name>
</gene>
<protein>
    <recommendedName>
        <fullName>SHC-transforming protein 1</fullName>
    </recommendedName>
    <alternativeName>
        <fullName>Src homology 2 domain-containing-transforming protein C1</fullName>
        <shortName>SH2 domain protein C1</shortName>
    </alternativeName>
</protein>
<name>SHC1_BOVIN</name>
<comment type="function">
    <text evidence="1">Signaling adapter that couples activated growth factor receptors to signaling pathways. Participates in a signaling cascade initiated by activated KIT and KITLG/SCF. Participates in signaling downstream of the angiopoietin receptor TEK/TIE2, and plays a role in the regulation of endothelial cell migration and sprouting angiogenesis (By similarity).</text>
</comment>
<comment type="subunit">
    <text evidence="1 2 3 4">Interacts with CPNE3; this interaction may mediate the binding of CPNE3 with ERBB2 (By similarity). Interacts with the Trk receptors NTRK1, NTRK2 and NTRK3; in a phosphotyrosine-dependent manner. Interacts with the NPXY motif of tyrosine-phosphorylated IGF1R and INSR in vitro via the PID domain. Once activated, binds to GRB2. Interacts with tyrosine-phosphorylated CD3T and DDR2. Interacts with the N-terminal region of APS. Interacts with phosphorylated LRP1 and IRS4. Interacts with INPP5D/SHIP1 and INPPL1/SHIP2. Interacts with ALK, GAB2, GRB7 and KIT. Interacts with PTPN6/SHP (tyrosine phosphorylated). Identified in a complex containing FGFR4, NCAM1, CDH2, PLCG1, FRS2, SRC, SHC1, GAP43 and CTTN. Interacts with FLT4 (tyrosine-phosphorylated). Interacts with EPHB1 and GRB2; activates the MAPK/ERK cascade to regulate cell migration. Interacts with PDGFRB (tyrosine-phosphorylated). Interacts with ERBB4. Interacts with TEK/TIE2 (tyrosine-phosphorylated). Interacts with PTK2/FAK1 (By similarity). Interacts with CEACAM1; this interaction is CEACAM1-phosphorylation-dependent and mediates interaction with EGFR or INSR resulting in decrease coupling of SHC1 to the MAPK3/ERK1-MAPK1/ERK2 pathway (By similarity). Interacts (via PID domain) with PEAK1 (when phosphorylated) (By similarity). Found in a complex with PPP1CA, PPP1CC, SHC1 and PEAK1 (By similarity).</text>
</comment>
<comment type="subcellular location">
    <subcellularLocation>
        <location evidence="1">Cytoplasm</location>
    </subcellularLocation>
    <subcellularLocation>
        <location evidence="2">Cell junction</location>
        <location evidence="2">Focal adhesion</location>
    </subcellularLocation>
</comment>
<comment type="PTM">
    <text evidence="1">Phosphorylated by activated epidermal growth factor receptor. Phosphorylated in response to KIT signaling. Tyrosine phosphorylated in response to FLT3 and FLT4 signaling and by ligand-activated ALK. Tyrosine phosphorylated by ligand-activated PDGFRB. Tyrosine phosphorylated by TEK/TIE2. May be tyrosine phosphorylated by activated PTK2/FAK1. Tyrosine phosphorylated by activated PTK2B/PYK2. Dephosphorylation by PTPN2 may regulate interaction with GRB2 (By similarity).</text>
</comment>
<sequence>MNKLSGGGGRRTRVEGGQLGGEEWTRHGSFVNKPTRGWLHPNDKVMGPGVSYLVRYMGCVEVLQSMRALDFNTRTQVTREAISLVCEAVPGAKGATRRRKPCSRPLSSILGRSNLKFAGMPITLTVSTSSLNLMAADCKQIIANHHMQSISFASGGDPDTAEYVAYVAKDPVNQRACHILECPEGLAQDVISTIGQAFELRFKQYLRNPPRLVTPHDRMAGFDGSAWDEEEEEPPDHQYYNDFPGKEPPLGGVVDMRLREGALPGAARPTPPSAQTPSHLGATLPVGQPAGGDPEARRQMPPPPPSSGRELFDDPSYVNVQNLDKARQAGAGAGPPNPTINGSAPRDLFDMKPFEDALRMPPPPQSTAMAEQLRGEPWFHGKLSRREAEALLQVNGDFLVRESTTTPGQYVLTGLQSGQPKHLLLVDPEGVVRTKDHRFESVSHLISYHMDNHLPIISAGSELCLQQPVERKL</sequence>
<keyword id="KW-0007">Acetylation</keyword>
<keyword id="KW-0037">Angiogenesis</keyword>
<keyword id="KW-0965">Cell junction</keyword>
<keyword id="KW-0963">Cytoplasm</keyword>
<keyword id="KW-0341">Growth regulation</keyword>
<keyword id="KW-0597">Phosphoprotein</keyword>
<keyword id="KW-1185">Reference proteome</keyword>
<keyword id="KW-0727">SH2 domain</keyword>
<dbReference type="EMBL" id="BC122688">
    <property type="protein sequence ID" value="AAI22689.1"/>
    <property type="molecule type" value="mRNA"/>
</dbReference>
<dbReference type="EMBL" id="DQ125497">
    <property type="protein sequence ID" value="AAZ38953.1"/>
    <property type="molecule type" value="mRNA"/>
</dbReference>
<dbReference type="RefSeq" id="NP_001068773.1">
    <property type="nucleotide sequence ID" value="NM_001075305.2"/>
</dbReference>
<dbReference type="RefSeq" id="NP_001157533.1">
    <property type="nucleotide sequence ID" value="NM_001164061.1"/>
</dbReference>
<dbReference type="BMRB" id="Q0IIE2"/>
<dbReference type="SMR" id="Q0IIE2"/>
<dbReference type="CORUM" id="Q0IIE2"/>
<dbReference type="FunCoup" id="Q0IIE2">
    <property type="interactions" value="2846"/>
</dbReference>
<dbReference type="STRING" id="9913.ENSBTAP00000026432"/>
<dbReference type="PaxDb" id="9913-ENSBTAP00000026432"/>
<dbReference type="GeneID" id="507196"/>
<dbReference type="KEGG" id="bta:507196"/>
<dbReference type="CTD" id="6464"/>
<dbReference type="VEuPathDB" id="HostDB:ENSBTAG00000019838"/>
<dbReference type="eggNOG" id="KOG3697">
    <property type="taxonomic scope" value="Eukaryota"/>
</dbReference>
<dbReference type="HOGENOM" id="CLU_029532_2_0_1"/>
<dbReference type="InParanoid" id="Q0IIE2"/>
<dbReference type="OrthoDB" id="9938362at2759"/>
<dbReference type="Reactome" id="R-BTA-1250196">
    <property type="pathway name" value="SHC1 events in ERBB2 signaling"/>
</dbReference>
<dbReference type="Reactome" id="R-BTA-1250347">
    <property type="pathway name" value="SHC1 events in ERBB4 signaling"/>
</dbReference>
<dbReference type="Reactome" id="R-BTA-167044">
    <property type="pathway name" value="Signalling to RAS"/>
</dbReference>
<dbReference type="Reactome" id="R-BTA-180336">
    <property type="pathway name" value="SHC1 events in EGFR signaling"/>
</dbReference>
<dbReference type="Reactome" id="R-BTA-201556">
    <property type="pathway name" value="Signaling by ALK"/>
</dbReference>
<dbReference type="Reactome" id="R-BTA-210993">
    <property type="pathway name" value="Tie2 Signaling"/>
</dbReference>
<dbReference type="Reactome" id="R-BTA-2424491">
    <property type="pathway name" value="DAP12 signaling"/>
</dbReference>
<dbReference type="Reactome" id="R-BTA-2428933">
    <property type="pathway name" value="SHC-related events triggered by IGF1R"/>
</dbReference>
<dbReference type="Reactome" id="R-BTA-2730905">
    <property type="pathway name" value="Role of LAT2/NTAL/LAB on calcium mobilization"/>
</dbReference>
<dbReference type="Reactome" id="R-BTA-2871796">
    <property type="pathway name" value="FCERI mediated MAPK activation"/>
</dbReference>
<dbReference type="Reactome" id="R-BTA-2871809">
    <property type="pathway name" value="FCERI mediated Ca+2 mobilization"/>
</dbReference>
<dbReference type="Reactome" id="R-BTA-354192">
    <property type="pathway name" value="Integrin signaling"/>
</dbReference>
<dbReference type="Reactome" id="R-BTA-512988">
    <property type="pathway name" value="Interleukin-3, Interleukin-5 and GM-CSF signaling"/>
</dbReference>
<dbReference type="Reactome" id="R-BTA-5654688">
    <property type="pathway name" value="SHC-mediated cascade:FGFR1"/>
</dbReference>
<dbReference type="Reactome" id="R-BTA-5654699">
    <property type="pathway name" value="SHC-mediated cascade:FGFR2"/>
</dbReference>
<dbReference type="Reactome" id="R-BTA-5654704">
    <property type="pathway name" value="SHC-mediated cascade:FGFR3"/>
</dbReference>
<dbReference type="Reactome" id="R-BTA-5654719">
    <property type="pathway name" value="SHC-mediated cascade:FGFR4"/>
</dbReference>
<dbReference type="Reactome" id="R-BTA-5673001">
    <property type="pathway name" value="RAF/MAP kinase cascade"/>
</dbReference>
<dbReference type="Reactome" id="R-BTA-74749">
    <property type="pathway name" value="Signal attenuation"/>
</dbReference>
<dbReference type="Reactome" id="R-BTA-74751">
    <property type="pathway name" value="Insulin receptor signalling cascade"/>
</dbReference>
<dbReference type="Reactome" id="R-BTA-8851805">
    <property type="pathway name" value="MET activates RAS signaling"/>
</dbReference>
<dbReference type="Reactome" id="R-BTA-8853659">
    <property type="pathway name" value="RET signaling"/>
</dbReference>
<dbReference type="Reactome" id="R-BTA-8983432">
    <property type="pathway name" value="Interleukin-15 signaling"/>
</dbReference>
<dbReference type="Reactome" id="R-BTA-9009391">
    <property type="pathway name" value="Extra-nuclear estrogen signaling"/>
</dbReference>
<dbReference type="Reactome" id="R-BTA-9020558">
    <property type="pathway name" value="Interleukin-2 signaling"/>
</dbReference>
<dbReference type="Reactome" id="R-BTA-9027284">
    <property type="pathway name" value="Erythropoietin activates RAS"/>
</dbReference>
<dbReference type="Reactome" id="R-BTA-912526">
    <property type="pathway name" value="Interleukin receptor SHC signaling"/>
</dbReference>
<dbReference type="Reactome" id="R-BTA-9634597">
    <property type="pathway name" value="GPER1 signaling"/>
</dbReference>
<dbReference type="Reactome" id="R-BTA-9674555">
    <property type="pathway name" value="Signaling by CSF3 (G-CSF)"/>
</dbReference>
<dbReference type="Proteomes" id="UP000009136">
    <property type="component" value="Chromosome 3"/>
</dbReference>
<dbReference type="Bgee" id="ENSBTAG00000019838">
    <property type="expression patterns" value="Expressed in pigment epithelium of eye and 105 other cell types or tissues"/>
</dbReference>
<dbReference type="GO" id="GO:0005737">
    <property type="term" value="C:cytoplasm"/>
    <property type="evidence" value="ECO:0007669"/>
    <property type="project" value="UniProtKB-SubCell"/>
</dbReference>
<dbReference type="GO" id="GO:0005925">
    <property type="term" value="C:focal adhesion"/>
    <property type="evidence" value="ECO:0007669"/>
    <property type="project" value="UniProtKB-SubCell"/>
</dbReference>
<dbReference type="GO" id="GO:0005886">
    <property type="term" value="C:plasma membrane"/>
    <property type="evidence" value="ECO:0000318"/>
    <property type="project" value="GO_Central"/>
</dbReference>
<dbReference type="GO" id="GO:0030971">
    <property type="term" value="F:receptor tyrosine kinase binding"/>
    <property type="evidence" value="ECO:0000318"/>
    <property type="project" value="GO_Central"/>
</dbReference>
<dbReference type="GO" id="GO:0001525">
    <property type="term" value="P:angiogenesis"/>
    <property type="evidence" value="ECO:0007669"/>
    <property type="project" value="UniProtKB-KW"/>
</dbReference>
<dbReference type="GO" id="GO:0071363">
    <property type="term" value="P:cellular response to growth factor stimulus"/>
    <property type="evidence" value="ECO:0000250"/>
    <property type="project" value="UniProtKB"/>
</dbReference>
<dbReference type="GO" id="GO:0035924">
    <property type="term" value="P:cellular response to vascular endothelial growth factor stimulus"/>
    <property type="evidence" value="ECO:0000314"/>
    <property type="project" value="BHF-UCL"/>
</dbReference>
<dbReference type="GO" id="GO:0007173">
    <property type="term" value="P:epidermal growth factor receptor signaling pathway"/>
    <property type="evidence" value="ECO:0000318"/>
    <property type="project" value="GO_Central"/>
</dbReference>
<dbReference type="GO" id="GO:0008286">
    <property type="term" value="P:insulin receptor signaling pathway"/>
    <property type="evidence" value="ECO:0000318"/>
    <property type="project" value="GO_Central"/>
</dbReference>
<dbReference type="GO" id="GO:0035556">
    <property type="term" value="P:intracellular signal transduction"/>
    <property type="evidence" value="ECO:0007669"/>
    <property type="project" value="InterPro"/>
</dbReference>
<dbReference type="CDD" id="cd01209">
    <property type="entry name" value="PTB_Shc"/>
    <property type="match status" value="1"/>
</dbReference>
<dbReference type="CDD" id="cd09925">
    <property type="entry name" value="SH2_SHC"/>
    <property type="match status" value="1"/>
</dbReference>
<dbReference type="FunFam" id="2.30.29.30:FF:000036">
    <property type="entry name" value="SHC-transforming protein 1 isoform 3"/>
    <property type="match status" value="1"/>
</dbReference>
<dbReference type="FunFam" id="3.30.505.10:FF:000005">
    <property type="entry name" value="SHC-transforming protein 1 isoform 3"/>
    <property type="match status" value="1"/>
</dbReference>
<dbReference type="Gene3D" id="2.30.29.30">
    <property type="entry name" value="Pleckstrin-homology domain (PH domain)/Phosphotyrosine-binding domain (PTB)"/>
    <property type="match status" value="1"/>
</dbReference>
<dbReference type="Gene3D" id="3.30.505.10">
    <property type="entry name" value="SH2 domain"/>
    <property type="match status" value="1"/>
</dbReference>
<dbReference type="InterPro" id="IPR051235">
    <property type="entry name" value="CEP152/SHC-Transforming"/>
</dbReference>
<dbReference type="InterPro" id="IPR011993">
    <property type="entry name" value="PH-like_dom_sf"/>
</dbReference>
<dbReference type="InterPro" id="IPR006019">
    <property type="entry name" value="PID_Shc-like"/>
</dbReference>
<dbReference type="InterPro" id="IPR006020">
    <property type="entry name" value="PTB/PI_dom"/>
</dbReference>
<dbReference type="InterPro" id="IPR000980">
    <property type="entry name" value="SH2"/>
</dbReference>
<dbReference type="InterPro" id="IPR036860">
    <property type="entry name" value="SH2_dom_sf"/>
</dbReference>
<dbReference type="InterPro" id="IPR035676">
    <property type="entry name" value="SHC_SH2"/>
</dbReference>
<dbReference type="PANTHER" id="PTHR10337">
    <property type="entry name" value="SHC TRANSFORMING PROTEIN"/>
    <property type="match status" value="1"/>
</dbReference>
<dbReference type="PANTHER" id="PTHR10337:SF2">
    <property type="entry name" value="SHC-TRANSFORMING PROTEIN 1"/>
    <property type="match status" value="1"/>
</dbReference>
<dbReference type="Pfam" id="PF00640">
    <property type="entry name" value="PID"/>
    <property type="match status" value="1"/>
</dbReference>
<dbReference type="Pfam" id="PF00017">
    <property type="entry name" value="SH2"/>
    <property type="match status" value="1"/>
</dbReference>
<dbReference type="PRINTS" id="PR00401">
    <property type="entry name" value="SH2DOMAIN"/>
</dbReference>
<dbReference type="PRINTS" id="PR00629">
    <property type="entry name" value="SHCPIDOMAIN"/>
</dbReference>
<dbReference type="SMART" id="SM00462">
    <property type="entry name" value="PTB"/>
    <property type="match status" value="1"/>
</dbReference>
<dbReference type="SMART" id="SM00252">
    <property type="entry name" value="SH2"/>
    <property type="match status" value="1"/>
</dbReference>
<dbReference type="SUPFAM" id="SSF50729">
    <property type="entry name" value="PH domain-like"/>
    <property type="match status" value="1"/>
</dbReference>
<dbReference type="SUPFAM" id="SSF55550">
    <property type="entry name" value="SH2 domain"/>
    <property type="match status" value="1"/>
</dbReference>
<dbReference type="PROSITE" id="PS01179">
    <property type="entry name" value="PID"/>
    <property type="match status" value="1"/>
</dbReference>
<dbReference type="PROSITE" id="PS50001">
    <property type="entry name" value="SH2"/>
    <property type="match status" value="1"/>
</dbReference>
<proteinExistence type="evidence at transcript level"/>
<reference key="1">
    <citation type="submission" date="2006-08" db="EMBL/GenBank/DDBJ databases">
        <authorList>
            <consortium name="NIH - Mammalian Gene Collection (MGC) project"/>
        </authorList>
    </citation>
    <scope>NUCLEOTIDE SEQUENCE [LARGE SCALE MRNA]</scope>
    <source>
        <strain>Hereford</strain>
        <tissue>Ascending colon</tissue>
    </source>
</reference>
<reference key="2">
    <citation type="submission" date="2005-07" db="EMBL/GenBank/DDBJ databases">
        <title>Comparison of gene expression of intracellular signaling molecules in WC1.1+ vs. WC1.2+ gamma/delta T lymphocytes.</title>
        <authorList>
            <person name="Ozer D."/>
            <person name="Herzig C.T.A."/>
            <person name="Telfer J."/>
            <person name="Baldwin C.L."/>
        </authorList>
    </citation>
    <scope>NUCLEOTIDE SEQUENCE [MRNA] OF 1-151</scope>
    <source>
        <tissue>Peripheral blood monocyte</tissue>
    </source>
</reference>
<organism>
    <name type="scientific">Bos taurus</name>
    <name type="common">Bovine</name>
    <dbReference type="NCBI Taxonomy" id="9913"/>
    <lineage>
        <taxon>Eukaryota</taxon>
        <taxon>Metazoa</taxon>
        <taxon>Chordata</taxon>
        <taxon>Craniata</taxon>
        <taxon>Vertebrata</taxon>
        <taxon>Euteleostomi</taxon>
        <taxon>Mammalia</taxon>
        <taxon>Eutheria</taxon>
        <taxon>Laurasiatheria</taxon>
        <taxon>Artiodactyla</taxon>
        <taxon>Ruminantia</taxon>
        <taxon>Pecora</taxon>
        <taxon>Bovidae</taxon>
        <taxon>Bovinae</taxon>
        <taxon>Bos</taxon>
    </lineage>
</organism>